<evidence type="ECO:0000255" key="1">
    <source>
        <dbReference type="HAMAP-Rule" id="MF_00038"/>
    </source>
</evidence>
<proteinExistence type="inferred from homology"/>
<dbReference type="EC" id="2.7.8.13" evidence="1"/>
<dbReference type="EMBL" id="CP000947">
    <property type="protein sequence ID" value="ACA32280.1"/>
    <property type="molecule type" value="Genomic_DNA"/>
</dbReference>
<dbReference type="RefSeq" id="WP_011608511.1">
    <property type="nucleotide sequence ID" value="NC_010519.1"/>
</dbReference>
<dbReference type="SMR" id="B0US64"/>
<dbReference type="STRING" id="228400.HSM_0625"/>
<dbReference type="GeneID" id="31486906"/>
<dbReference type="KEGG" id="hsm:HSM_0625"/>
<dbReference type="HOGENOM" id="CLU_023982_0_0_6"/>
<dbReference type="UniPathway" id="UPA00219"/>
<dbReference type="GO" id="GO:0005886">
    <property type="term" value="C:plasma membrane"/>
    <property type="evidence" value="ECO:0007669"/>
    <property type="project" value="UniProtKB-SubCell"/>
</dbReference>
<dbReference type="GO" id="GO:0046872">
    <property type="term" value="F:metal ion binding"/>
    <property type="evidence" value="ECO:0007669"/>
    <property type="project" value="UniProtKB-KW"/>
</dbReference>
<dbReference type="GO" id="GO:0008963">
    <property type="term" value="F:phospho-N-acetylmuramoyl-pentapeptide-transferase activity"/>
    <property type="evidence" value="ECO:0007669"/>
    <property type="project" value="UniProtKB-UniRule"/>
</dbReference>
<dbReference type="GO" id="GO:0051992">
    <property type="term" value="F:UDP-N-acetylmuramoyl-L-alanyl-D-glutamyl-meso-2,6-diaminopimelyl-D-alanyl-D-alanine:undecaprenyl-phosphate transferase activity"/>
    <property type="evidence" value="ECO:0007669"/>
    <property type="project" value="RHEA"/>
</dbReference>
<dbReference type="GO" id="GO:0051301">
    <property type="term" value="P:cell division"/>
    <property type="evidence" value="ECO:0007669"/>
    <property type="project" value="UniProtKB-KW"/>
</dbReference>
<dbReference type="GO" id="GO:0071555">
    <property type="term" value="P:cell wall organization"/>
    <property type="evidence" value="ECO:0007669"/>
    <property type="project" value="UniProtKB-KW"/>
</dbReference>
<dbReference type="GO" id="GO:0009252">
    <property type="term" value="P:peptidoglycan biosynthetic process"/>
    <property type="evidence" value="ECO:0007669"/>
    <property type="project" value="UniProtKB-UniRule"/>
</dbReference>
<dbReference type="GO" id="GO:0008360">
    <property type="term" value="P:regulation of cell shape"/>
    <property type="evidence" value="ECO:0007669"/>
    <property type="project" value="UniProtKB-KW"/>
</dbReference>
<dbReference type="CDD" id="cd06852">
    <property type="entry name" value="GT_MraY"/>
    <property type="match status" value="1"/>
</dbReference>
<dbReference type="HAMAP" id="MF_00038">
    <property type="entry name" value="MraY"/>
    <property type="match status" value="1"/>
</dbReference>
<dbReference type="InterPro" id="IPR000715">
    <property type="entry name" value="Glycosyl_transferase_4"/>
</dbReference>
<dbReference type="InterPro" id="IPR003524">
    <property type="entry name" value="PNAcMuramoyl-5peptid_Trfase"/>
</dbReference>
<dbReference type="InterPro" id="IPR018480">
    <property type="entry name" value="PNAcMuramoyl-5peptid_Trfase_CS"/>
</dbReference>
<dbReference type="NCBIfam" id="TIGR00445">
    <property type="entry name" value="mraY"/>
    <property type="match status" value="1"/>
</dbReference>
<dbReference type="PANTHER" id="PTHR22926">
    <property type="entry name" value="PHOSPHO-N-ACETYLMURAMOYL-PENTAPEPTIDE-TRANSFERASE"/>
    <property type="match status" value="1"/>
</dbReference>
<dbReference type="PANTHER" id="PTHR22926:SF5">
    <property type="entry name" value="PHOSPHO-N-ACETYLMURAMOYL-PENTAPEPTIDE-TRANSFERASE HOMOLOG"/>
    <property type="match status" value="1"/>
</dbReference>
<dbReference type="Pfam" id="PF00953">
    <property type="entry name" value="Glycos_transf_4"/>
    <property type="match status" value="1"/>
</dbReference>
<dbReference type="Pfam" id="PF10555">
    <property type="entry name" value="MraY_sig1"/>
    <property type="match status" value="1"/>
</dbReference>
<dbReference type="PROSITE" id="PS01347">
    <property type="entry name" value="MRAY_1"/>
    <property type="match status" value="1"/>
</dbReference>
<dbReference type="PROSITE" id="PS01348">
    <property type="entry name" value="MRAY_2"/>
    <property type="match status" value="1"/>
</dbReference>
<accession>B0US64</accession>
<sequence>MLVWLAEYLHQYQSVFNVFSYLTVRAILALFTALLLSLWIGPKVIRRLQILKFGQEIRNDGPDSHLSKKGTPTMGGIMILFAIGVSTLLWANLANPYVWFCLFVLFGYGAVGFVDDYRKITRKNTAGLVARWKYFWLSVIALISAFGMYAIGKDTDATRLVVPFFKDVMPQLGLFYIVLAYFVIVGTGNAVNLTDGLDGLAIMPTVFVAAAFALIAWATGNIEWSKYLYIPYIKHTSELVIFCTAIVGAGLGFLWFNTYPAQLFMGDVGSLALGGVLGTIAVLVRQEFLLVIMGGVFVVETLSVILQVGSYKLRNGKRIFRMAPIHHHYELKGWPEPRVIIRFWIISLMLVLLGLITLKLR</sequence>
<gene>
    <name evidence="1" type="primary">mraY</name>
    <name type="ordered locus">HSM_0625</name>
</gene>
<keyword id="KW-0131">Cell cycle</keyword>
<keyword id="KW-0132">Cell division</keyword>
<keyword id="KW-0997">Cell inner membrane</keyword>
<keyword id="KW-1003">Cell membrane</keyword>
<keyword id="KW-0133">Cell shape</keyword>
<keyword id="KW-0961">Cell wall biogenesis/degradation</keyword>
<keyword id="KW-0460">Magnesium</keyword>
<keyword id="KW-0472">Membrane</keyword>
<keyword id="KW-0479">Metal-binding</keyword>
<keyword id="KW-0573">Peptidoglycan synthesis</keyword>
<keyword id="KW-0808">Transferase</keyword>
<keyword id="KW-0812">Transmembrane</keyword>
<keyword id="KW-1133">Transmembrane helix</keyword>
<organism>
    <name type="scientific">Histophilus somni (strain 2336)</name>
    <name type="common">Haemophilus somnus</name>
    <dbReference type="NCBI Taxonomy" id="228400"/>
    <lineage>
        <taxon>Bacteria</taxon>
        <taxon>Pseudomonadati</taxon>
        <taxon>Pseudomonadota</taxon>
        <taxon>Gammaproteobacteria</taxon>
        <taxon>Pasteurellales</taxon>
        <taxon>Pasteurellaceae</taxon>
        <taxon>Histophilus</taxon>
    </lineage>
</organism>
<name>MRAY_HISS2</name>
<comment type="function">
    <text evidence="1">Catalyzes the initial step of the lipid cycle reactions in the biosynthesis of the cell wall peptidoglycan: transfers peptidoglycan precursor phospho-MurNAc-pentapeptide from UDP-MurNAc-pentapeptide onto the lipid carrier undecaprenyl phosphate, yielding undecaprenyl-pyrophosphoryl-MurNAc-pentapeptide, known as lipid I.</text>
</comment>
<comment type="catalytic activity">
    <reaction evidence="1">
        <text>UDP-N-acetyl-alpha-D-muramoyl-L-alanyl-gamma-D-glutamyl-meso-2,6-diaminopimeloyl-D-alanyl-D-alanine + di-trans,octa-cis-undecaprenyl phosphate = di-trans,octa-cis-undecaprenyl diphospho-N-acetyl-alpha-D-muramoyl-L-alanyl-D-glutamyl-meso-2,6-diaminopimeloyl-D-alanyl-D-alanine + UMP</text>
        <dbReference type="Rhea" id="RHEA:28386"/>
        <dbReference type="ChEBI" id="CHEBI:57865"/>
        <dbReference type="ChEBI" id="CHEBI:60392"/>
        <dbReference type="ChEBI" id="CHEBI:61386"/>
        <dbReference type="ChEBI" id="CHEBI:61387"/>
        <dbReference type="EC" id="2.7.8.13"/>
    </reaction>
</comment>
<comment type="cofactor">
    <cofactor evidence="1">
        <name>Mg(2+)</name>
        <dbReference type="ChEBI" id="CHEBI:18420"/>
    </cofactor>
</comment>
<comment type="pathway">
    <text evidence="1">Cell wall biogenesis; peptidoglycan biosynthesis.</text>
</comment>
<comment type="subcellular location">
    <subcellularLocation>
        <location evidence="1">Cell inner membrane</location>
        <topology evidence="1">Multi-pass membrane protein</topology>
    </subcellularLocation>
</comment>
<comment type="similarity">
    <text evidence="1">Belongs to the glycosyltransferase 4 family. MraY subfamily.</text>
</comment>
<feature type="chain" id="PRO_1000090630" description="Phospho-N-acetylmuramoyl-pentapeptide-transferase">
    <location>
        <begin position="1"/>
        <end position="361"/>
    </location>
</feature>
<feature type="transmembrane region" description="Helical" evidence="1">
    <location>
        <begin position="21"/>
        <end position="41"/>
    </location>
</feature>
<feature type="transmembrane region" description="Helical" evidence="1">
    <location>
        <begin position="74"/>
        <end position="94"/>
    </location>
</feature>
<feature type="transmembrane region" description="Helical" evidence="1">
    <location>
        <begin position="97"/>
        <end position="117"/>
    </location>
</feature>
<feature type="transmembrane region" description="Helical" evidence="1">
    <location>
        <begin position="132"/>
        <end position="152"/>
    </location>
</feature>
<feature type="transmembrane region" description="Helical" evidence="1">
    <location>
        <begin position="168"/>
        <end position="188"/>
    </location>
</feature>
<feature type="transmembrane region" description="Helical" evidence="1">
    <location>
        <begin position="199"/>
        <end position="219"/>
    </location>
</feature>
<feature type="transmembrane region" description="Helical" evidence="1">
    <location>
        <begin position="239"/>
        <end position="259"/>
    </location>
</feature>
<feature type="transmembrane region" description="Helical" evidence="1">
    <location>
        <begin position="264"/>
        <end position="284"/>
    </location>
</feature>
<feature type="transmembrane region" description="Helical" evidence="1">
    <location>
        <begin position="288"/>
        <end position="308"/>
    </location>
</feature>
<feature type="transmembrane region" description="Helical" evidence="1">
    <location>
        <begin position="339"/>
        <end position="359"/>
    </location>
</feature>
<reference key="1">
    <citation type="submission" date="2008-02" db="EMBL/GenBank/DDBJ databases">
        <title>Complete sequence of Haemophilus somnus 2336.</title>
        <authorList>
            <consortium name="US DOE Joint Genome Institute"/>
            <person name="Siddaramappa S."/>
            <person name="Duncan A.J."/>
            <person name="Challacombe J.F."/>
            <person name="Rainey D."/>
            <person name="Gillaspy A.F."/>
            <person name="Carson M."/>
            <person name="Gipson J."/>
            <person name="Gipson M."/>
            <person name="Bruce D."/>
            <person name="Detter J.C."/>
            <person name="Han C.S."/>
            <person name="Land M."/>
            <person name="Tapia R."/>
            <person name="Thompson L.S."/>
            <person name="Orvis J."/>
            <person name="Zaitshik J."/>
            <person name="Barnes G."/>
            <person name="Brettin T.S."/>
            <person name="Dyer D.W."/>
            <person name="Inzana T.J."/>
        </authorList>
    </citation>
    <scope>NUCLEOTIDE SEQUENCE [LARGE SCALE GENOMIC DNA]</scope>
    <source>
        <strain>2336</strain>
    </source>
</reference>
<protein>
    <recommendedName>
        <fullName evidence="1">Phospho-N-acetylmuramoyl-pentapeptide-transferase</fullName>
        <ecNumber evidence="1">2.7.8.13</ecNumber>
    </recommendedName>
    <alternativeName>
        <fullName evidence="1">UDP-MurNAc-pentapeptide phosphotransferase</fullName>
    </alternativeName>
</protein>